<comment type="similarity">
    <text evidence="1">Belongs to the UPF0246 family.</text>
</comment>
<sequence length="257" mass="28860">MLIVVSPAKTLDYESPVSTSNFTQPELTAHSAELIQVCRTLSSQDVSELMSVSDKIAGLNVARFAQWSETFTLDNARQAIFAFKGDVYTGLEAETLSPQDLDFAQQHLRMLSGLYGVLRPLDLMQPYRLEMGTKLANARGANLYQFWGDIITEKLNQAIEAQGDNVLVNLASNEYFKAVNPKRLNAQIVTPIFKDAKNGQYKIISFFAKKARGMMARYIIENRIKSVKDLEGFNTAGYYFVASESTPTELVFKREEQ</sequence>
<organism>
    <name type="scientific">Vibrio cholerae serotype O1 (strain ATCC 39315 / El Tor Inaba N16961)</name>
    <dbReference type="NCBI Taxonomy" id="243277"/>
    <lineage>
        <taxon>Bacteria</taxon>
        <taxon>Pseudomonadati</taxon>
        <taxon>Pseudomonadota</taxon>
        <taxon>Gammaproteobacteria</taxon>
        <taxon>Vibrionales</taxon>
        <taxon>Vibrionaceae</taxon>
        <taxon>Vibrio</taxon>
    </lineage>
</organism>
<feature type="chain" id="PRO_0000204015" description="UPF0246 protein VC_2355">
    <location>
        <begin position="1"/>
        <end position="257"/>
    </location>
</feature>
<name>Y2355_VIBCH</name>
<protein>
    <recommendedName>
        <fullName evidence="1">UPF0246 protein VC_2355</fullName>
    </recommendedName>
</protein>
<keyword id="KW-1185">Reference proteome</keyword>
<gene>
    <name type="ordered locus">VC_2355</name>
</gene>
<accession>Q9KPL2</accession>
<reference key="1">
    <citation type="journal article" date="2000" name="Nature">
        <title>DNA sequence of both chromosomes of the cholera pathogen Vibrio cholerae.</title>
        <authorList>
            <person name="Heidelberg J.F."/>
            <person name="Eisen J.A."/>
            <person name="Nelson W.C."/>
            <person name="Clayton R.A."/>
            <person name="Gwinn M.L."/>
            <person name="Dodson R.J."/>
            <person name="Haft D.H."/>
            <person name="Hickey E.K."/>
            <person name="Peterson J.D."/>
            <person name="Umayam L.A."/>
            <person name="Gill S.R."/>
            <person name="Nelson K.E."/>
            <person name="Read T.D."/>
            <person name="Tettelin H."/>
            <person name="Richardson D.L."/>
            <person name="Ermolaeva M.D."/>
            <person name="Vamathevan J.J."/>
            <person name="Bass S."/>
            <person name="Qin H."/>
            <person name="Dragoi I."/>
            <person name="Sellers P."/>
            <person name="McDonald L.A."/>
            <person name="Utterback T.R."/>
            <person name="Fleischmann R.D."/>
            <person name="Nierman W.C."/>
            <person name="White O."/>
            <person name="Salzberg S.L."/>
            <person name="Smith H.O."/>
            <person name="Colwell R.R."/>
            <person name="Mekalanos J.J."/>
            <person name="Venter J.C."/>
            <person name="Fraser C.M."/>
        </authorList>
    </citation>
    <scope>NUCLEOTIDE SEQUENCE [LARGE SCALE GENOMIC DNA]</scope>
    <source>
        <strain>ATCC 39315 / El Tor Inaba N16961</strain>
    </source>
</reference>
<dbReference type="EMBL" id="AE003852">
    <property type="protein sequence ID" value="AAF95498.1"/>
    <property type="molecule type" value="Genomic_DNA"/>
</dbReference>
<dbReference type="PIR" id="C82088">
    <property type="entry name" value="C82088"/>
</dbReference>
<dbReference type="RefSeq" id="NP_231985.1">
    <property type="nucleotide sequence ID" value="NC_002505.1"/>
</dbReference>
<dbReference type="SMR" id="Q9KPL2"/>
<dbReference type="STRING" id="243277.VC_2355"/>
<dbReference type="DNASU" id="2613151"/>
<dbReference type="EnsemblBacteria" id="AAF95498">
    <property type="protein sequence ID" value="AAF95498"/>
    <property type="gene ID" value="VC_2355"/>
</dbReference>
<dbReference type="KEGG" id="vch:VC_2355"/>
<dbReference type="PATRIC" id="fig|243277.26.peg.2242"/>
<dbReference type="eggNOG" id="COG3022">
    <property type="taxonomic scope" value="Bacteria"/>
</dbReference>
<dbReference type="HOGENOM" id="CLU_061989_0_0_6"/>
<dbReference type="Proteomes" id="UP000000584">
    <property type="component" value="Chromosome 1"/>
</dbReference>
<dbReference type="GO" id="GO:0005829">
    <property type="term" value="C:cytosol"/>
    <property type="evidence" value="ECO:0000318"/>
    <property type="project" value="GO_Central"/>
</dbReference>
<dbReference type="GO" id="GO:0033194">
    <property type="term" value="P:response to hydroperoxide"/>
    <property type="evidence" value="ECO:0000318"/>
    <property type="project" value="GO_Central"/>
</dbReference>
<dbReference type="HAMAP" id="MF_00652">
    <property type="entry name" value="UPF0246"/>
    <property type="match status" value="1"/>
</dbReference>
<dbReference type="InterPro" id="IPR005583">
    <property type="entry name" value="YaaA"/>
</dbReference>
<dbReference type="NCBIfam" id="NF002541">
    <property type="entry name" value="PRK02101.1-1"/>
    <property type="match status" value="1"/>
</dbReference>
<dbReference type="NCBIfam" id="NF002542">
    <property type="entry name" value="PRK02101.1-3"/>
    <property type="match status" value="1"/>
</dbReference>
<dbReference type="PANTHER" id="PTHR30283:SF4">
    <property type="entry name" value="PEROXIDE STRESS RESISTANCE PROTEIN YAAA"/>
    <property type="match status" value="1"/>
</dbReference>
<dbReference type="PANTHER" id="PTHR30283">
    <property type="entry name" value="PEROXIDE STRESS RESPONSE PROTEIN YAAA"/>
    <property type="match status" value="1"/>
</dbReference>
<dbReference type="Pfam" id="PF03883">
    <property type="entry name" value="H2O2_YaaD"/>
    <property type="match status" value="1"/>
</dbReference>
<evidence type="ECO:0000255" key="1">
    <source>
        <dbReference type="HAMAP-Rule" id="MF_00652"/>
    </source>
</evidence>
<proteinExistence type="inferred from homology"/>